<protein>
    <recommendedName>
        <fullName>Immunogenic protein MPT70</fullName>
    </recommendedName>
</protein>
<comment type="subunit">
    <text>Generally found as a monomer; homodimer in culture fluids.</text>
</comment>
<comment type="subcellular location">
    <subcellularLocation>
        <location>Secreted</location>
    </subcellularLocation>
</comment>
<feature type="signal peptide" evidence="1">
    <location>
        <begin position="1"/>
        <end position="30"/>
    </location>
</feature>
<feature type="chain" id="PRO_0000008786" description="Immunogenic protein MPT70">
    <location>
        <begin position="31"/>
        <end position="193"/>
    </location>
</feature>
<feature type="domain" description="FAS1" evidence="2">
    <location>
        <begin position="57"/>
        <end position="189"/>
    </location>
</feature>
<feature type="strand" evidence="3">
    <location>
        <begin position="34"/>
        <end position="36"/>
    </location>
</feature>
<feature type="helix" evidence="3">
    <location>
        <begin position="37"/>
        <end position="44"/>
    </location>
</feature>
<feature type="strand" evidence="3">
    <location>
        <begin position="46"/>
        <end position="48"/>
    </location>
</feature>
<feature type="helix" evidence="3">
    <location>
        <begin position="54"/>
        <end position="57"/>
    </location>
</feature>
<feature type="helix" evidence="3">
    <location>
        <begin position="60"/>
        <end position="64"/>
    </location>
</feature>
<feature type="turn" evidence="3">
    <location>
        <begin position="68"/>
        <end position="70"/>
    </location>
</feature>
<feature type="helix" evidence="3">
    <location>
        <begin position="71"/>
        <end position="78"/>
    </location>
</feature>
<feature type="strand" evidence="3">
    <location>
        <begin position="79"/>
        <end position="81"/>
    </location>
</feature>
<feature type="helix" evidence="3">
    <location>
        <begin position="88"/>
        <end position="91"/>
    </location>
</feature>
<feature type="strand" evidence="3">
    <location>
        <begin position="93"/>
        <end position="98"/>
    </location>
</feature>
<feature type="helix" evidence="3">
    <location>
        <begin position="103"/>
        <end position="108"/>
    </location>
</feature>
<feature type="helix" evidence="3">
    <location>
        <begin position="111"/>
        <end position="117"/>
    </location>
</feature>
<feature type="helix" evidence="3">
    <location>
        <begin position="123"/>
        <end position="130"/>
    </location>
</feature>
<feature type="strand" evidence="3">
    <location>
        <begin position="132"/>
        <end position="135"/>
    </location>
</feature>
<feature type="turn" evidence="3">
    <location>
        <begin position="139"/>
        <end position="141"/>
    </location>
</feature>
<feature type="strand" evidence="3">
    <location>
        <begin position="144"/>
        <end position="147"/>
    </location>
</feature>
<feature type="strand" evidence="3">
    <location>
        <begin position="151"/>
        <end position="158"/>
    </location>
</feature>
<feature type="strand" evidence="3">
    <location>
        <begin position="163"/>
        <end position="165"/>
    </location>
</feature>
<feature type="strand" evidence="3">
    <location>
        <begin position="171"/>
        <end position="173"/>
    </location>
</feature>
<feature type="strand" evidence="3">
    <location>
        <begin position="178"/>
        <end position="183"/>
    </location>
</feature>
<feature type="strand" evidence="3">
    <location>
        <begin position="185"/>
        <end position="187"/>
    </location>
</feature>
<gene>
    <name type="primary">mpt70</name>
    <name type="ordered locus">Rv2875</name>
    <name type="ORF">MTCY274.06</name>
</gene>
<accession>P9WNF5</accession>
<accession>L0TDT6</accession>
<accession>P0A668</accession>
<accession>Q48934</accession>
<accession>Q48946</accession>
<accession>Q48947</accession>
<accession>Q48948</accession>
<accession>Q50656</accession>
<accession>Q50769</accession>
<keyword id="KW-0002">3D-structure</keyword>
<keyword id="KW-1185">Reference proteome</keyword>
<keyword id="KW-0964">Secreted</keyword>
<keyword id="KW-0732">Signal</keyword>
<name>MP70_MYCTU</name>
<evidence type="ECO:0000250" key="1"/>
<evidence type="ECO:0000255" key="2">
    <source>
        <dbReference type="PROSITE-ProRule" id="PRU00082"/>
    </source>
</evidence>
<evidence type="ECO:0007829" key="3">
    <source>
        <dbReference type="PDB" id="1NYO"/>
    </source>
</evidence>
<sequence>MKVKNTIAATSFAAAGLAALAVAVSPPAAAGDLVGPGCAEYAAANPTGPASVQGMSQDPVAVAASNNPELTTLTAALSGQLNPQVNLVDTLNSGQYTVFAPTNAAFSKLPASTIDELKTNSSLLTSILTYHVVAGQTSPANVVGTRQTLQGASVTVTGQGNSLKVGNADVVCGGVSTANATVYMIDSVLMPPA</sequence>
<dbReference type="EMBL" id="D37968">
    <property type="protein sequence ID" value="BAA07184.1"/>
    <property type="molecule type" value="Genomic_DNA"/>
</dbReference>
<dbReference type="EMBL" id="AL123456">
    <property type="protein sequence ID" value="CCP45677.1"/>
    <property type="molecule type" value="Genomic_DNA"/>
</dbReference>
<dbReference type="PIR" id="F70923">
    <property type="entry name" value="F70923"/>
</dbReference>
<dbReference type="RefSeq" id="NP_217391.1">
    <property type="nucleotide sequence ID" value="NC_000962.3"/>
</dbReference>
<dbReference type="RefSeq" id="WP_003414644.1">
    <property type="nucleotide sequence ID" value="NZ_NVQJ01000006.1"/>
</dbReference>
<dbReference type="PDB" id="1NYO">
    <property type="method" value="NMR"/>
    <property type="chains" value="A=31-193"/>
</dbReference>
<dbReference type="PDBsum" id="1NYO"/>
<dbReference type="SMR" id="P9WNF5"/>
<dbReference type="FunCoup" id="P9WNF5">
    <property type="interactions" value="1"/>
</dbReference>
<dbReference type="STRING" id="83332.Rv2875"/>
<dbReference type="PaxDb" id="83332-Rv2875"/>
<dbReference type="DNASU" id="887724"/>
<dbReference type="GeneID" id="887724"/>
<dbReference type="KEGG" id="mtu:Rv2875"/>
<dbReference type="KEGG" id="mtv:RVBD_2875"/>
<dbReference type="TubercuList" id="Rv2875"/>
<dbReference type="eggNOG" id="COG2335">
    <property type="taxonomic scope" value="Bacteria"/>
</dbReference>
<dbReference type="InParanoid" id="P9WNF5"/>
<dbReference type="OrthoDB" id="9800666at2"/>
<dbReference type="PhylomeDB" id="P9WNF5"/>
<dbReference type="EvolutionaryTrace" id="P9WNF5"/>
<dbReference type="Proteomes" id="UP000001584">
    <property type="component" value="Chromosome"/>
</dbReference>
<dbReference type="GO" id="GO:0031012">
    <property type="term" value="C:extracellular matrix"/>
    <property type="evidence" value="ECO:0000318"/>
    <property type="project" value="GO_Central"/>
</dbReference>
<dbReference type="GO" id="GO:0005576">
    <property type="term" value="C:extracellular region"/>
    <property type="evidence" value="ECO:0007005"/>
    <property type="project" value="MTBBASE"/>
</dbReference>
<dbReference type="GO" id="GO:0005615">
    <property type="term" value="C:extracellular space"/>
    <property type="evidence" value="ECO:0000318"/>
    <property type="project" value="GO_Central"/>
</dbReference>
<dbReference type="GO" id="GO:0050839">
    <property type="term" value="F:cell adhesion molecule binding"/>
    <property type="evidence" value="ECO:0000318"/>
    <property type="project" value="GO_Central"/>
</dbReference>
<dbReference type="GO" id="GO:0007155">
    <property type="term" value="P:cell adhesion"/>
    <property type="evidence" value="ECO:0000318"/>
    <property type="project" value="GO_Central"/>
</dbReference>
<dbReference type="GO" id="GO:0030198">
    <property type="term" value="P:extracellular matrix organization"/>
    <property type="evidence" value="ECO:0000318"/>
    <property type="project" value="GO_Central"/>
</dbReference>
<dbReference type="FunFam" id="2.30.180.10:FF:000019">
    <property type="entry name" value="Cell surface lipoprotein"/>
    <property type="match status" value="1"/>
</dbReference>
<dbReference type="Gene3D" id="2.30.180.10">
    <property type="entry name" value="FAS1 domain"/>
    <property type="match status" value="1"/>
</dbReference>
<dbReference type="InterPro" id="IPR050904">
    <property type="entry name" value="Adhesion/Biosynth-related"/>
</dbReference>
<dbReference type="InterPro" id="IPR036378">
    <property type="entry name" value="FAS1_dom_sf"/>
</dbReference>
<dbReference type="InterPro" id="IPR000782">
    <property type="entry name" value="FAS1_domain"/>
</dbReference>
<dbReference type="PANTHER" id="PTHR10900:SF77">
    <property type="entry name" value="FI19380P1"/>
    <property type="match status" value="1"/>
</dbReference>
<dbReference type="PANTHER" id="PTHR10900">
    <property type="entry name" value="PERIOSTIN-RELATED"/>
    <property type="match status" value="1"/>
</dbReference>
<dbReference type="Pfam" id="PF02469">
    <property type="entry name" value="Fasciclin"/>
    <property type="match status" value="1"/>
</dbReference>
<dbReference type="SMART" id="SM00554">
    <property type="entry name" value="FAS1"/>
    <property type="match status" value="1"/>
</dbReference>
<dbReference type="SUPFAM" id="SSF82153">
    <property type="entry name" value="FAS1 domain"/>
    <property type="match status" value="1"/>
</dbReference>
<dbReference type="PROSITE" id="PS50213">
    <property type="entry name" value="FAS1"/>
    <property type="match status" value="1"/>
</dbReference>
<reference key="1">
    <citation type="journal article" date="1995" name="Scand. J. Immunol.">
        <title>Cloning and sequencing of a unique antigen MPT70 from Mycobacterium tuberculosis H37Rv and expression in BCG using E. coli-mycobacteria shuttle vector.</title>
        <authorList>
            <person name="Matsumoto S."/>
            <person name="Matsuo T."/>
            <person name="Ohara N."/>
            <person name="Hotokezaka H."/>
            <person name="Naitoh M."/>
            <person name="Minami J."/>
            <person name="Yamada T."/>
        </authorList>
    </citation>
    <scope>NUCLEOTIDE SEQUENCE [GENOMIC DNA]</scope>
    <source>
        <strain>ATCC 25618 / H37Rv</strain>
    </source>
</reference>
<reference key="2">
    <citation type="journal article" date="1998" name="Nature">
        <title>Deciphering the biology of Mycobacterium tuberculosis from the complete genome sequence.</title>
        <authorList>
            <person name="Cole S.T."/>
            <person name="Brosch R."/>
            <person name="Parkhill J."/>
            <person name="Garnier T."/>
            <person name="Churcher C.M."/>
            <person name="Harris D.E."/>
            <person name="Gordon S.V."/>
            <person name="Eiglmeier K."/>
            <person name="Gas S."/>
            <person name="Barry C.E. III"/>
            <person name="Tekaia F."/>
            <person name="Badcock K."/>
            <person name="Basham D."/>
            <person name="Brown D."/>
            <person name="Chillingworth T."/>
            <person name="Connor R."/>
            <person name="Davies R.M."/>
            <person name="Devlin K."/>
            <person name="Feltwell T."/>
            <person name="Gentles S."/>
            <person name="Hamlin N."/>
            <person name="Holroyd S."/>
            <person name="Hornsby T."/>
            <person name="Jagels K."/>
            <person name="Krogh A."/>
            <person name="McLean J."/>
            <person name="Moule S."/>
            <person name="Murphy L.D."/>
            <person name="Oliver S."/>
            <person name="Osborne J."/>
            <person name="Quail M.A."/>
            <person name="Rajandream M.A."/>
            <person name="Rogers J."/>
            <person name="Rutter S."/>
            <person name="Seeger K."/>
            <person name="Skelton S."/>
            <person name="Squares S."/>
            <person name="Squares R."/>
            <person name="Sulston J.E."/>
            <person name="Taylor K."/>
            <person name="Whitehead S."/>
            <person name="Barrell B.G."/>
        </authorList>
    </citation>
    <scope>NUCLEOTIDE SEQUENCE [LARGE SCALE GENOMIC DNA]</scope>
    <source>
        <strain>ATCC 25618 / H37Rv</strain>
    </source>
</reference>
<reference key="3">
    <citation type="journal article" date="2011" name="Mol. Cell. Proteomics">
        <title>Proteogenomic analysis of Mycobacterium tuberculosis by high resolution mass spectrometry.</title>
        <authorList>
            <person name="Kelkar D.S."/>
            <person name="Kumar D."/>
            <person name="Kumar P."/>
            <person name="Balakrishnan L."/>
            <person name="Muthusamy B."/>
            <person name="Yadav A.K."/>
            <person name="Shrivastava P."/>
            <person name="Marimuthu A."/>
            <person name="Anand S."/>
            <person name="Sundaram H."/>
            <person name="Kingsbury R."/>
            <person name="Harsha H.C."/>
            <person name="Nair B."/>
            <person name="Prasad T.S."/>
            <person name="Chauhan D.S."/>
            <person name="Katoch K."/>
            <person name="Katoch V.M."/>
            <person name="Kumar P."/>
            <person name="Chaerkady R."/>
            <person name="Ramachandran S."/>
            <person name="Dash D."/>
            <person name="Pandey A."/>
        </authorList>
    </citation>
    <scope>IDENTIFICATION BY MASS SPECTROMETRY [LARGE SCALE ANALYSIS]</scope>
    <source>
        <strain>ATCC 25618 / H37Rv</strain>
    </source>
</reference>
<organism>
    <name type="scientific">Mycobacterium tuberculosis (strain ATCC 25618 / H37Rv)</name>
    <dbReference type="NCBI Taxonomy" id="83332"/>
    <lineage>
        <taxon>Bacteria</taxon>
        <taxon>Bacillati</taxon>
        <taxon>Actinomycetota</taxon>
        <taxon>Actinomycetes</taxon>
        <taxon>Mycobacteriales</taxon>
        <taxon>Mycobacteriaceae</taxon>
        <taxon>Mycobacterium</taxon>
        <taxon>Mycobacterium tuberculosis complex</taxon>
    </lineage>
</organism>
<proteinExistence type="evidence at protein level"/>